<comment type="function">
    <text evidence="1">Catalyzes the conversion of 4-hydroxy-tetrahydrodipicolinate (HTPA) to tetrahydrodipicolinate.</text>
</comment>
<comment type="catalytic activity">
    <reaction evidence="1">
        <text>(S)-2,3,4,5-tetrahydrodipicolinate + NAD(+) + H2O = (2S,4S)-4-hydroxy-2,3,4,5-tetrahydrodipicolinate + NADH + H(+)</text>
        <dbReference type="Rhea" id="RHEA:35323"/>
        <dbReference type="ChEBI" id="CHEBI:15377"/>
        <dbReference type="ChEBI" id="CHEBI:15378"/>
        <dbReference type="ChEBI" id="CHEBI:16845"/>
        <dbReference type="ChEBI" id="CHEBI:57540"/>
        <dbReference type="ChEBI" id="CHEBI:57945"/>
        <dbReference type="ChEBI" id="CHEBI:67139"/>
        <dbReference type="EC" id="1.17.1.8"/>
    </reaction>
</comment>
<comment type="catalytic activity">
    <reaction evidence="1">
        <text>(S)-2,3,4,5-tetrahydrodipicolinate + NADP(+) + H2O = (2S,4S)-4-hydroxy-2,3,4,5-tetrahydrodipicolinate + NADPH + H(+)</text>
        <dbReference type="Rhea" id="RHEA:35331"/>
        <dbReference type="ChEBI" id="CHEBI:15377"/>
        <dbReference type="ChEBI" id="CHEBI:15378"/>
        <dbReference type="ChEBI" id="CHEBI:16845"/>
        <dbReference type="ChEBI" id="CHEBI:57783"/>
        <dbReference type="ChEBI" id="CHEBI:58349"/>
        <dbReference type="ChEBI" id="CHEBI:67139"/>
        <dbReference type="EC" id="1.17.1.8"/>
    </reaction>
</comment>
<comment type="pathway">
    <text evidence="1">Amino-acid biosynthesis; L-lysine biosynthesis via DAP pathway; (S)-tetrahydrodipicolinate from L-aspartate: step 4/4.</text>
</comment>
<comment type="subcellular location">
    <subcellularLocation>
        <location evidence="1">Cytoplasm</location>
    </subcellularLocation>
</comment>
<comment type="similarity">
    <text evidence="1">Belongs to the DapB family.</text>
</comment>
<comment type="caution">
    <text evidence="2">Was originally thought to be a dihydrodipicolinate reductase (DHDPR), catalyzing the conversion of dihydrodipicolinate to tetrahydrodipicolinate. However, it was shown in E.coli that the substrate of the enzymatic reaction is not dihydrodipicolinate (DHDP) but in fact (2S,4S)-4-hydroxy-2,3,4,5-tetrahydrodipicolinic acid (HTPA), the product released by the DapA-catalyzed reaction.</text>
</comment>
<evidence type="ECO:0000255" key="1">
    <source>
        <dbReference type="HAMAP-Rule" id="MF_00102"/>
    </source>
</evidence>
<evidence type="ECO:0000305" key="2"/>
<accession>B3EG74</accession>
<feature type="chain" id="PRO_1000093952" description="4-hydroxy-tetrahydrodipicolinate reductase">
    <location>
        <begin position="1"/>
        <end position="248"/>
    </location>
</feature>
<feature type="active site" description="Proton donor/acceptor" evidence="1">
    <location>
        <position position="134"/>
    </location>
</feature>
<feature type="active site" description="Proton donor" evidence="1">
    <location>
        <position position="138"/>
    </location>
</feature>
<feature type="binding site" evidence="1">
    <location>
        <position position="32"/>
    </location>
    <ligand>
        <name>NAD(+)</name>
        <dbReference type="ChEBI" id="CHEBI:57540"/>
    </ligand>
</feature>
<feature type="binding site" evidence="1">
    <location>
        <begin position="74"/>
        <end position="76"/>
    </location>
    <ligand>
        <name>NAD(+)</name>
        <dbReference type="ChEBI" id="CHEBI:57540"/>
    </ligand>
</feature>
<feature type="binding site" evidence="1">
    <location>
        <begin position="99"/>
        <end position="102"/>
    </location>
    <ligand>
        <name>NAD(+)</name>
        <dbReference type="ChEBI" id="CHEBI:57540"/>
    </ligand>
</feature>
<feature type="binding site" evidence="1">
    <location>
        <position position="135"/>
    </location>
    <ligand>
        <name>(S)-2,3,4,5-tetrahydrodipicolinate</name>
        <dbReference type="ChEBI" id="CHEBI:16845"/>
    </ligand>
</feature>
<feature type="binding site" evidence="1">
    <location>
        <begin position="144"/>
        <end position="145"/>
    </location>
    <ligand>
        <name>(S)-2,3,4,5-tetrahydrodipicolinate</name>
        <dbReference type="ChEBI" id="CHEBI:16845"/>
    </ligand>
</feature>
<protein>
    <recommendedName>
        <fullName evidence="1">4-hydroxy-tetrahydrodipicolinate reductase</fullName>
        <shortName evidence="1">HTPA reductase</shortName>
        <ecNumber evidence="1">1.17.1.8</ecNumber>
    </recommendedName>
</protein>
<name>DAPB_CHLL2</name>
<reference key="1">
    <citation type="submission" date="2008-05" db="EMBL/GenBank/DDBJ databases">
        <title>Complete sequence of Chlorobium limicola DSM 245.</title>
        <authorList>
            <consortium name="US DOE Joint Genome Institute"/>
            <person name="Lucas S."/>
            <person name="Copeland A."/>
            <person name="Lapidus A."/>
            <person name="Glavina del Rio T."/>
            <person name="Dalin E."/>
            <person name="Tice H."/>
            <person name="Bruce D."/>
            <person name="Goodwin L."/>
            <person name="Pitluck S."/>
            <person name="Schmutz J."/>
            <person name="Larimer F."/>
            <person name="Land M."/>
            <person name="Hauser L."/>
            <person name="Kyrpides N."/>
            <person name="Ovchinnikova G."/>
            <person name="Zhao F."/>
            <person name="Li T."/>
            <person name="Liu Z."/>
            <person name="Overmann J."/>
            <person name="Bryant D.A."/>
            <person name="Richardson P."/>
        </authorList>
    </citation>
    <scope>NUCLEOTIDE SEQUENCE [LARGE SCALE GENOMIC DNA]</scope>
    <source>
        <strain>DSM 245 / NBRC 103803 / 6330</strain>
    </source>
</reference>
<keyword id="KW-0028">Amino-acid biosynthesis</keyword>
<keyword id="KW-0963">Cytoplasm</keyword>
<keyword id="KW-0220">Diaminopimelate biosynthesis</keyword>
<keyword id="KW-0457">Lysine biosynthesis</keyword>
<keyword id="KW-0520">NAD</keyword>
<keyword id="KW-0521">NADP</keyword>
<keyword id="KW-0560">Oxidoreductase</keyword>
<gene>
    <name evidence="1" type="primary">dapB</name>
    <name type="ordered locus">Clim_2054</name>
</gene>
<organism>
    <name type="scientific">Chlorobium limicola (strain DSM 245 / NBRC 103803 / 6330)</name>
    <dbReference type="NCBI Taxonomy" id="290315"/>
    <lineage>
        <taxon>Bacteria</taxon>
        <taxon>Pseudomonadati</taxon>
        <taxon>Chlorobiota</taxon>
        <taxon>Chlorobiia</taxon>
        <taxon>Chlorobiales</taxon>
        <taxon>Chlorobiaceae</taxon>
        <taxon>Chlorobium/Pelodictyon group</taxon>
        <taxon>Chlorobium</taxon>
    </lineage>
</organism>
<sequence>MKFTLTGSGRMGQQVADVINRSGIHEIASILDDRSVVTAESFLGSDAIIDFTVRDAFLQNLPAMLQSGVPVVVGTTGWDDQIESVKRRVIESGSSLLYSANFSLGVNIFLRTVREAARLIAPFDQFDIAFTEHHHTGKADFPSGTALRAAEMILSVNPRKRTIVRELFDDRKITADELQVGALRLGSVFGKHTAYIDSEMDEIVISHNAKNREGFASGAVQTAKWLAARHTASPGFYTMDDFLNEMLA</sequence>
<dbReference type="EC" id="1.17.1.8" evidence="1"/>
<dbReference type="EMBL" id="CP001097">
    <property type="protein sequence ID" value="ACD91083.1"/>
    <property type="molecule type" value="Genomic_DNA"/>
</dbReference>
<dbReference type="RefSeq" id="WP_012466952.1">
    <property type="nucleotide sequence ID" value="NC_010803.1"/>
</dbReference>
<dbReference type="SMR" id="B3EG74"/>
<dbReference type="STRING" id="290315.Clim_2054"/>
<dbReference type="KEGG" id="cli:Clim_2054"/>
<dbReference type="eggNOG" id="COG0289">
    <property type="taxonomic scope" value="Bacteria"/>
</dbReference>
<dbReference type="HOGENOM" id="CLU_047479_1_0_10"/>
<dbReference type="OrthoDB" id="9790352at2"/>
<dbReference type="UniPathway" id="UPA00034">
    <property type="reaction ID" value="UER00018"/>
</dbReference>
<dbReference type="Proteomes" id="UP000008841">
    <property type="component" value="Chromosome"/>
</dbReference>
<dbReference type="GO" id="GO:0005829">
    <property type="term" value="C:cytosol"/>
    <property type="evidence" value="ECO:0007669"/>
    <property type="project" value="TreeGrafter"/>
</dbReference>
<dbReference type="GO" id="GO:0008839">
    <property type="term" value="F:4-hydroxy-tetrahydrodipicolinate reductase"/>
    <property type="evidence" value="ECO:0007669"/>
    <property type="project" value="UniProtKB-EC"/>
</dbReference>
<dbReference type="GO" id="GO:0051287">
    <property type="term" value="F:NAD binding"/>
    <property type="evidence" value="ECO:0007669"/>
    <property type="project" value="UniProtKB-UniRule"/>
</dbReference>
<dbReference type="GO" id="GO:0050661">
    <property type="term" value="F:NADP binding"/>
    <property type="evidence" value="ECO:0007669"/>
    <property type="project" value="UniProtKB-UniRule"/>
</dbReference>
<dbReference type="GO" id="GO:0016726">
    <property type="term" value="F:oxidoreductase activity, acting on CH or CH2 groups, NAD or NADP as acceptor"/>
    <property type="evidence" value="ECO:0007669"/>
    <property type="project" value="UniProtKB-UniRule"/>
</dbReference>
<dbReference type="GO" id="GO:0019877">
    <property type="term" value="P:diaminopimelate biosynthetic process"/>
    <property type="evidence" value="ECO:0007669"/>
    <property type="project" value="UniProtKB-UniRule"/>
</dbReference>
<dbReference type="GO" id="GO:0009089">
    <property type="term" value="P:lysine biosynthetic process via diaminopimelate"/>
    <property type="evidence" value="ECO:0007669"/>
    <property type="project" value="UniProtKB-UniRule"/>
</dbReference>
<dbReference type="Gene3D" id="3.30.360.10">
    <property type="entry name" value="Dihydrodipicolinate Reductase, domain 2"/>
    <property type="match status" value="1"/>
</dbReference>
<dbReference type="Gene3D" id="3.40.50.720">
    <property type="entry name" value="NAD(P)-binding Rossmann-like Domain"/>
    <property type="match status" value="1"/>
</dbReference>
<dbReference type="HAMAP" id="MF_00102">
    <property type="entry name" value="DapB"/>
    <property type="match status" value="1"/>
</dbReference>
<dbReference type="InterPro" id="IPR022663">
    <property type="entry name" value="DapB_C"/>
</dbReference>
<dbReference type="InterPro" id="IPR000846">
    <property type="entry name" value="DapB_N"/>
</dbReference>
<dbReference type="InterPro" id="IPR023940">
    <property type="entry name" value="DHDPR_bac"/>
</dbReference>
<dbReference type="InterPro" id="IPR036291">
    <property type="entry name" value="NAD(P)-bd_dom_sf"/>
</dbReference>
<dbReference type="NCBIfam" id="TIGR00036">
    <property type="entry name" value="dapB"/>
    <property type="match status" value="1"/>
</dbReference>
<dbReference type="PANTHER" id="PTHR20836:SF0">
    <property type="entry name" value="4-HYDROXY-TETRAHYDRODIPICOLINATE REDUCTASE 1, CHLOROPLASTIC-RELATED"/>
    <property type="match status" value="1"/>
</dbReference>
<dbReference type="PANTHER" id="PTHR20836">
    <property type="entry name" value="DIHYDRODIPICOLINATE REDUCTASE"/>
    <property type="match status" value="1"/>
</dbReference>
<dbReference type="Pfam" id="PF05173">
    <property type="entry name" value="DapB_C"/>
    <property type="match status" value="1"/>
</dbReference>
<dbReference type="Pfam" id="PF01113">
    <property type="entry name" value="DapB_N"/>
    <property type="match status" value="1"/>
</dbReference>
<dbReference type="PIRSF" id="PIRSF000161">
    <property type="entry name" value="DHPR"/>
    <property type="match status" value="1"/>
</dbReference>
<dbReference type="SUPFAM" id="SSF55347">
    <property type="entry name" value="Glyceraldehyde-3-phosphate dehydrogenase-like, C-terminal domain"/>
    <property type="match status" value="1"/>
</dbReference>
<dbReference type="SUPFAM" id="SSF51735">
    <property type="entry name" value="NAD(P)-binding Rossmann-fold domains"/>
    <property type="match status" value="1"/>
</dbReference>
<proteinExistence type="inferred from homology"/>